<feature type="chain" id="PRO_0000446276" description="Poly(ribitol-phosphate) beta-glucosyltransferase">
    <location>
        <begin position="1"/>
        <end position="634"/>
    </location>
</feature>
<accession>E0U4V7</accession>
<organism>
    <name type="scientific">Bacillus spizizenii (strain ATCC 23059 / NRRL B-14472 / W23)</name>
    <name type="common">Bacillus subtilis subsp. spizizenii</name>
    <dbReference type="NCBI Taxonomy" id="655816"/>
    <lineage>
        <taxon>Bacteria</taxon>
        <taxon>Bacillati</taxon>
        <taxon>Bacillota</taxon>
        <taxon>Bacilli</taxon>
        <taxon>Bacillales</taxon>
        <taxon>Bacillaceae</taxon>
        <taxon>Bacillus</taxon>
    </lineage>
</organism>
<proteinExistence type="evidence at protein level"/>
<gene>
    <name evidence="4" type="primary">tarQ</name>
    <name evidence="4" type="ordered locus">BSUW23_17465</name>
</gene>
<dbReference type="EC" id="2.4.1.53" evidence="1"/>
<dbReference type="EMBL" id="CP002183">
    <property type="protein sequence ID" value="ADM39528.1"/>
    <property type="molecule type" value="Genomic_DNA"/>
</dbReference>
<dbReference type="SMR" id="E0U4V7"/>
<dbReference type="KEGG" id="bss:BSUW23_17465"/>
<dbReference type="HOGENOM" id="CLU_018620_2_0_9"/>
<dbReference type="BioCyc" id="MetaCyc:MONOMER-19974"/>
<dbReference type="UniPathway" id="UPA00790"/>
<dbReference type="Proteomes" id="UP000002233">
    <property type="component" value="Chromosome"/>
</dbReference>
<dbReference type="GO" id="GO:0047266">
    <property type="term" value="F:poly(ribitol-phosphate) beta-glucosyltransferase activity"/>
    <property type="evidence" value="ECO:0007669"/>
    <property type="project" value="UniProtKB-EC"/>
</dbReference>
<dbReference type="GO" id="GO:0071555">
    <property type="term" value="P:cell wall organization"/>
    <property type="evidence" value="ECO:0007669"/>
    <property type="project" value="UniProtKB-KW"/>
</dbReference>
<dbReference type="GO" id="GO:0019350">
    <property type="term" value="P:teichoic acid biosynthetic process"/>
    <property type="evidence" value="ECO:0007669"/>
    <property type="project" value="UniProtKB-KW"/>
</dbReference>
<dbReference type="CDD" id="cd00761">
    <property type="entry name" value="Glyco_tranf_GTA_type"/>
    <property type="match status" value="1"/>
</dbReference>
<dbReference type="Gene3D" id="3.90.550.10">
    <property type="entry name" value="Spore Coat Polysaccharide Biosynthesis Protein SpsA, Chain A"/>
    <property type="match status" value="1"/>
</dbReference>
<dbReference type="InterPro" id="IPR001173">
    <property type="entry name" value="Glyco_trans_2-like"/>
</dbReference>
<dbReference type="InterPro" id="IPR029044">
    <property type="entry name" value="Nucleotide-diphossugar_trans"/>
</dbReference>
<dbReference type="InterPro" id="IPR054028">
    <property type="entry name" value="TarS/TarP_linker"/>
</dbReference>
<dbReference type="InterPro" id="IPR041038">
    <property type="entry name" value="TarS_C1"/>
</dbReference>
<dbReference type="PANTHER" id="PTHR22916">
    <property type="entry name" value="GLYCOSYLTRANSFERASE"/>
    <property type="match status" value="1"/>
</dbReference>
<dbReference type="PANTHER" id="PTHR22916:SF3">
    <property type="entry name" value="UDP-GLCNAC:BETAGAL BETA-1,3-N-ACETYLGLUCOSAMINYLTRANSFERASE-LIKE PROTEIN 1"/>
    <property type="match status" value="1"/>
</dbReference>
<dbReference type="Pfam" id="PF00535">
    <property type="entry name" value="Glycos_transf_2"/>
    <property type="match status" value="1"/>
</dbReference>
<dbReference type="Pfam" id="PF18674">
    <property type="entry name" value="TarS_C1"/>
    <property type="match status" value="1"/>
</dbReference>
<dbReference type="Pfam" id="PF22181">
    <property type="entry name" value="TarS_linker"/>
    <property type="match status" value="1"/>
</dbReference>
<dbReference type="SUPFAM" id="SSF53448">
    <property type="entry name" value="Nucleotide-diphospho-sugar transferases"/>
    <property type="match status" value="1"/>
</dbReference>
<protein>
    <recommendedName>
        <fullName evidence="3">Poly(ribitol-phosphate) beta-glucosyltransferase</fullName>
        <ecNumber evidence="1">2.4.1.53</ecNumber>
    </recommendedName>
    <alternativeName>
        <fullName evidence="2">WTA beta-O glucose transferase</fullName>
    </alternativeName>
</protein>
<name>TARQ_BACSH</name>
<sequence length="634" mass="73226">MKISIVIPVYNSEDLISECLDSLVNQTMPKEDYEIICVDDKSTDSSLDILNQYKKKYENVVVIERTVNSGGPGAPRNDAIKIAKGEYILFVDSDDYIGSEALLRWYNFSKENQSDITLGKLKGINGRGVPKSMFKETNPDVDLVDSKIVFTLGPQKLFKASLLKENKITFPTHIKAAEDQVFTMNAYLKAKKISVSADYDYYYLVKRDGEHMSVAYVPPENFYGAMEDIISAIKASDLEEARKIKLMAVFLNRHFDFSRTKNVTIKMKTDEERAEWFRYLSSFIHAVPEEADQFVLPHIKLRLLFIRNNDLRGLTQYEREEQDIKKFCTVNNGELIARYPSLERYSISEELLKVNYKNKLEHYLQNIEFSDHSLSIQGTITHKLLDDETNKNQSLTGVFVHRDTKAEKYIAPASYDNSTFTFECKFDELASAEEDLGVWDFFIESSIDGYKLRARIGNKRAAYKYSTKTMYLGHNALFVYSARPYFTMNYDNLSIDIKKHAYTEAELSYETESKDLSFIFKDKQIYLPNHSKIIVNTGQSEISLPVKRIDLEPNCTKLTVNVQSLLEQLAHVKKERLIEFAINTSQNKISAKVDNQAIILDTKSVERKSMLFFNKMVEVQYKLLTSKSKFYFQY</sequence>
<comment type="function">
    <text evidence="1">Attaches glucose residues to poly(RboP)-wall teichoic acids (WTAs).</text>
</comment>
<comment type="catalytic activity">
    <reaction evidence="1">
        <text>4-O-[(D-ribitylphospho)(n)-D-ribitylphospho-(2R)-glycerylphospho]-N-acetyl-beta-D-mannosaminyl-(1-&gt;4)-N-acetyl-alpha-D-glucosaminyl di-trans,octa-cis-undecaprenyl diphosphate + n UDP-alpha-D-glucose = 4-O-[(2-beta-D-glucosyl-D-ribitylphospho)(n)-D-ribitylphospho-(2R)-glycerylphospho]-N-acetyl-beta-D-mannosaminyl-(1-&gt;4)-N-acetyl-alpha-D-glucosaminyl di-trans,octa-cis-undecaprenyl diphosphate + n UDP + n H(+)</text>
        <dbReference type="Rhea" id="RHEA:10068"/>
        <dbReference type="Rhea" id="RHEA-COMP:12833"/>
        <dbReference type="Rhea" id="RHEA-COMP:14260"/>
        <dbReference type="ChEBI" id="CHEBI:15378"/>
        <dbReference type="ChEBI" id="CHEBI:58223"/>
        <dbReference type="ChEBI" id="CHEBI:58885"/>
        <dbReference type="ChEBI" id="CHEBI:133894"/>
        <dbReference type="ChEBI" id="CHEBI:139149"/>
        <dbReference type="EC" id="2.4.1.53"/>
    </reaction>
</comment>
<comment type="pathway">
    <text evidence="1">Cell wall biogenesis; poly(ribitol phosphate) teichoic acid biosynthesis.</text>
</comment>
<comment type="disruption phenotype">
    <text evidence="1">Deletion of the gene abolishes all WTA glucose modifications.</text>
</comment>
<comment type="similarity">
    <text evidence="3">Belongs to the glycosyltransferase 2 family.</text>
</comment>
<evidence type="ECO:0000269" key="1">
    <source>
    </source>
</evidence>
<evidence type="ECO:0000303" key="2">
    <source>
    </source>
</evidence>
<evidence type="ECO:0000305" key="3"/>
<evidence type="ECO:0000312" key="4">
    <source>
        <dbReference type="EMBL" id="ADM39528.1"/>
    </source>
</evidence>
<keyword id="KW-0961">Cell wall biogenesis/degradation</keyword>
<keyword id="KW-0328">Glycosyltransferase</keyword>
<keyword id="KW-0777">Teichoic acid biosynthesis</keyword>
<keyword id="KW-0808">Transferase</keyword>
<reference key="1">
    <citation type="journal article" date="2011" name="Microbiology">
        <title>The genome sequence of Bacillus subtilis subsp. spizizenii W23: insights into speciation within the B. subtilis complex and into the history of B. subtilis genetics.</title>
        <authorList>
            <person name="Zeigler D.R."/>
        </authorList>
    </citation>
    <scope>NUCLEOTIDE SEQUENCE [LARGE SCALE GENOMIC DNA]</scope>
    <source>
        <strain>ATCC 23059 / NRRL B-14472 / W23</strain>
    </source>
</reference>
<reference key="2">
    <citation type="journal article" date="2012" name="Proc. Natl. Acad. Sci. U.S.A.">
        <title>Methicillin resistance in Staphylococcus aureus requires glycosylated wall teichoic acids.</title>
        <authorList>
            <person name="Brown S."/>
            <person name="Xia G."/>
            <person name="Luhachack L.G."/>
            <person name="Campbell J."/>
            <person name="Meredith T.C."/>
            <person name="Chen C."/>
            <person name="Winstel V."/>
            <person name="Gekeler C."/>
            <person name="Irazoqui J.E."/>
            <person name="Peschel A."/>
            <person name="Walker S."/>
        </authorList>
    </citation>
    <scope>FUNCTION</scope>
    <scope>CATALYTIC ACTIVITY</scope>
    <scope>PATHWAY</scope>
    <scope>DISRUPTION PHENOTYPE</scope>
    <source>
        <strain>ATCC 23059 / NRRL B-14472 / W23</strain>
    </source>
</reference>